<reference key="1">
    <citation type="submission" date="2005-09" db="EMBL/GenBank/DDBJ databases">
        <title>Complete genome sequence of Clostridium kluyveri and comparative genomics of Clostridia species.</title>
        <authorList>
            <person name="Inui M."/>
            <person name="Nonaka H."/>
            <person name="Shinoda Y."/>
            <person name="Ikenaga Y."/>
            <person name="Abe M."/>
            <person name="Naito K."/>
            <person name="Vertes A.A."/>
            <person name="Yukawa H."/>
        </authorList>
    </citation>
    <scope>NUCLEOTIDE SEQUENCE [LARGE SCALE GENOMIC DNA]</scope>
    <source>
        <strain>NBRC 12016</strain>
    </source>
</reference>
<accession>B9E6B4</accession>
<evidence type="ECO:0000255" key="1">
    <source>
        <dbReference type="HAMAP-Rule" id="MF_00145"/>
    </source>
</evidence>
<protein>
    <recommendedName>
        <fullName evidence="1">Phosphoglycerate kinase</fullName>
        <ecNumber evidence="1">2.7.2.3</ecNumber>
    </recommendedName>
</protein>
<name>PGK_CLOK1</name>
<organism>
    <name type="scientific">Clostridium kluyveri (strain NBRC 12016)</name>
    <dbReference type="NCBI Taxonomy" id="583346"/>
    <lineage>
        <taxon>Bacteria</taxon>
        <taxon>Bacillati</taxon>
        <taxon>Bacillota</taxon>
        <taxon>Clostridia</taxon>
        <taxon>Eubacteriales</taxon>
        <taxon>Clostridiaceae</taxon>
        <taxon>Clostridium</taxon>
    </lineage>
</organism>
<dbReference type="EC" id="2.7.2.3" evidence="1"/>
<dbReference type="EMBL" id="AP009049">
    <property type="protein sequence ID" value="BAH08039.1"/>
    <property type="molecule type" value="Genomic_DNA"/>
</dbReference>
<dbReference type="RefSeq" id="WP_012103714.1">
    <property type="nucleotide sequence ID" value="NC_011837.1"/>
</dbReference>
<dbReference type="SMR" id="B9E6B4"/>
<dbReference type="KEGG" id="ckr:CKR_2988"/>
<dbReference type="HOGENOM" id="CLU_025427_0_2_9"/>
<dbReference type="UniPathway" id="UPA00109">
    <property type="reaction ID" value="UER00185"/>
</dbReference>
<dbReference type="Proteomes" id="UP000007969">
    <property type="component" value="Chromosome"/>
</dbReference>
<dbReference type="GO" id="GO:0005829">
    <property type="term" value="C:cytosol"/>
    <property type="evidence" value="ECO:0007669"/>
    <property type="project" value="TreeGrafter"/>
</dbReference>
<dbReference type="GO" id="GO:0043531">
    <property type="term" value="F:ADP binding"/>
    <property type="evidence" value="ECO:0007669"/>
    <property type="project" value="TreeGrafter"/>
</dbReference>
<dbReference type="GO" id="GO:0005524">
    <property type="term" value="F:ATP binding"/>
    <property type="evidence" value="ECO:0007669"/>
    <property type="project" value="UniProtKB-KW"/>
</dbReference>
<dbReference type="GO" id="GO:0004618">
    <property type="term" value="F:phosphoglycerate kinase activity"/>
    <property type="evidence" value="ECO:0007669"/>
    <property type="project" value="UniProtKB-UniRule"/>
</dbReference>
<dbReference type="GO" id="GO:0006094">
    <property type="term" value="P:gluconeogenesis"/>
    <property type="evidence" value="ECO:0007669"/>
    <property type="project" value="TreeGrafter"/>
</dbReference>
<dbReference type="GO" id="GO:0006096">
    <property type="term" value="P:glycolytic process"/>
    <property type="evidence" value="ECO:0007669"/>
    <property type="project" value="UniProtKB-UniRule"/>
</dbReference>
<dbReference type="CDD" id="cd00318">
    <property type="entry name" value="Phosphoglycerate_kinase"/>
    <property type="match status" value="1"/>
</dbReference>
<dbReference type="FunFam" id="3.40.50.1260:FF:000007">
    <property type="entry name" value="Phosphoglycerate kinase"/>
    <property type="match status" value="1"/>
</dbReference>
<dbReference type="FunFam" id="3.40.50.1260:FF:000008">
    <property type="entry name" value="Phosphoglycerate kinase"/>
    <property type="match status" value="1"/>
</dbReference>
<dbReference type="Gene3D" id="3.40.50.1260">
    <property type="entry name" value="Phosphoglycerate kinase, N-terminal domain"/>
    <property type="match status" value="2"/>
</dbReference>
<dbReference type="HAMAP" id="MF_00145">
    <property type="entry name" value="Phosphoglyc_kinase"/>
    <property type="match status" value="1"/>
</dbReference>
<dbReference type="InterPro" id="IPR001576">
    <property type="entry name" value="Phosphoglycerate_kinase"/>
</dbReference>
<dbReference type="InterPro" id="IPR015911">
    <property type="entry name" value="Phosphoglycerate_kinase_CS"/>
</dbReference>
<dbReference type="InterPro" id="IPR015824">
    <property type="entry name" value="Phosphoglycerate_kinase_N"/>
</dbReference>
<dbReference type="InterPro" id="IPR036043">
    <property type="entry name" value="Phosphoglycerate_kinase_sf"/>
</dbReference>
<dbReference type="PANTHER" id="PTHR11406">
    <property type="entry name" value="PHOSPHOGLYCERATE KINASE"/>
    <property type="match status" value="1"/>
</dbReference>
<dbReference type="PANTHER" id="PTHR11406:SF23">
    <property type="entry name" value="PHOSPHOGLYCERATE KINASE 1, CHLOROPLASTIC-RELATED"/>
    <property type="match status" value="1"/>
</dbReference>
<dbReference type="Pfam" id="PF00162">
    <property type="entry name" value="PGK"/>
    <property type="match status" value="1"/>
</dbReference>
<dbReference type="PIRSF" id="PIRSF000724">
    <property type="entry name" value="Pgk"/>
    <property type="match status" value="1"/>
</dbReference>
<dbReference type="PRINTS" id="PR00477">
    <property type="entry name" value="PHGLYCKINASE"/>
</dbReference>
<dbReference type="SUPFAM" id="SSF53748">
    <property type="entry name" value="Phosphoglycerate kinase"/>
    <property type="match status" value="1"/>
</dbReference>
<dbReference type="PROSITE" id="PS00111">
    <property type="entry name" value="PGLYCERATE_KINASE"/>
    <property type="match status" value="1"/>
</dbReference>
<sequence>MVFNKKTIEDVDVKGKRVLVRCDFNVPLQEGKITDENRLIGSLPTIKYLMENNAKVILCSHLGKPKGEVKPEMSLLPVAKRLSELLKKEVVFAADDNVVGENAKAAVKNMKDGDVILLQNTRYRIEETKNQDNFSKELASLGEIFVNDAFGTAHRAHCSTVGVTKFLPTAVCGYLIQKELEFLGNAIENPSRPFTAILGGVKVSDKINVINNLLEKVDTLIIGGGMSYTFARAQGYTIGTSVVEEDKIEYAKEMIDKAKEKGIKLLLPIDRVVTDKFDESAEPILEDDKNIKDGYMGMDIGPKTAKVYADAIKDSKTIIWNGPMGVFEFKNFAKGTFAVAKAMAESGAITIIGGGDSAAAINQLGFGDKMTHISTGGGASLEFLGGEELPGISALNNK</sequence>
<proteinExistence type="inferred from homology"/>
<keyword id="KW-0067">ATP-binding</keyword>
<keyword id="KW-0963">Cytoplasm</keyword>
<keyword id="KW-0324">Glycolysis</keyword>
<keyword id="KW-0418">Kinase</keyword>
<keyword id="KW-0547">Nucleotide-binding</keyword>
<keyword id="KW-0808">Transferase</keyword>
<gene>
    <name evidence="1" type="primary">pgk</name>
    <name type="ordered locus">CKR_2988</name>
</gene>
<feature type="chain" id="PRO_1000192819" description="Phosphoglycerate kinase">
    <location>
        <begin position="1"/>
        <end position="398"/>
    </location>
</feature>
<feature type="binding site" evidence="1">
    <location>
        <begin position="23"/>
        <end position="25"/>
    </location>
    <ligand>
        <name>substrate</name>
    </ligand>
</feature>
<feature type="binding site" evidence="1">
    <location>
        <position position="38"/>
    </location>
    <ligand>
        <name>substrate</name>
    </ligand>
</feature>
<feature type="binding site" evidence="1">
    <location>
        <begin position="61"/>
        <end position="64"/>
    </location>
    <ligand>
        <name>substrate</name>
    </ligand>
</feature>
<feature type="binding site" evidence="1">
    <location>
        <position position="122"/>
    </location>
    <ligand>
        <name>substrate</name>
    </ligand>
</feature>
<feature type="binding site" evidence="1">
    <location>
        <position position="155"/>
    </location>
    <ligand>
        <name>substrate</name>
    </ligand>
</feature>
<feature type="binding site" evidence="1">
    <location>
        <position position="206"/>
    </location>
    <ligand>
        <name>ATP</name>
        <dbReference type="ChEBI" id="CHEBI:30616"/>
    </ligand>
</feature>
<feature type="binding site" evidence="1">
    <location>
        <position position="297"/>
    </location>
    <ligand>
        <name>ATP</name>
        <dbReference type="ChEBI" id="CHEBI:30616"/>
    </ligand>
</feature>
<feature type="binding site" evidence="1">
    <location>
        <position position="328"/>
    </location>
    <ligand>
        <name>ATP</name>
        <dbReference type="ChEBI" id="CHEBI:30616"/>
    </ligand>
</feature>
<feature type="binding site" evidence="1">
    <location>
        <begin position="354"/>
        <end position="357"/>
    </location>
    <ligand>
        <name>ATP</name>
        <dbReference type="ChEBI" id="CHEBI:30616"/>
    </ligand>
</feature>
<comment type="catalytic activity">
    <reaction evidence="1">
        <text>(2R)-3-phosphoglycerate + ATP = (2R)-3-phospho-glyceroyl phosphate + ADP</text>
        <dbReference type="Rhea" id="RHEA:14801"/>
        <dbReference type="ChEBI" id="CHEBI:30616"/>
        <dbReference type="ChEBI" id="CHEBI:57604"/>
        <dbReference type="ChEBI" id="CHEBI:58272"/>
        <dbReference type="ChEBI" id="CHEBI:456216"/>
        <dbReference type="EC" id="2.7.2.3"/>
    </reaction>
</comment>
<comment type="pathway">
    <text evidence="1">Carbohydrate degradation; glycolysis; pyruvate from D-glyceraldehyde 3-phosphate: step 2/5.</text>
</comment>
<comment type="subunit">
    <text evidence="1">Monomer.</text>
</comment>
<comment type="subcellular location">
    <subcellularLocation>
        <location evidence="1">Cytoplasm</location>
    </subcellularLocation>
</comment>
<comment type="similarity">
    <text evidence="1">Belongs to the phosphoglycerate kinase family.</text>
</comment>